<accession>Q04Q93</accession>
<proteinExistence type="inferred from homology"/>
<feature type="chain" id="PRO_0000310121" description="Probable nicotinate-nucleotide adenylyltransferase">
    <location>
        <begin position="1"/>
        <end position="197"/>
    </location>
</feature>
<evidence type="ECO:0000255" key="1">
    <source>
        <dbReference type="HAMAP-Rule" id="MF_00244"/>
    </source>
</evidence>
<dbReference type="EC" id="2.7.7.18" evidence="1"/>
<dbReference type="EMBL" id="CP000350">
    <property type="protein sequence ID" value="ABJ76927.1"/>
    <property type="molecule type" value="Genomic_DNA"/>
</dbReference>
<dbReference type="RefSeq" id="WP_011669541.1">
    <property type="nucleotide sequence ID" value="NC_008510.1"/>
</dbReference>
<dbReference type="SMR" id="Q04Q93"/>
<dbReference type="KEGG" id="lbj:LBJ_2489"/>
<dbReference type="HOGENOM" id="CLU_069765_3_2_12"/>
<dbReference type="UniPathway" id="UPA00253">
    <property type="reaction ID" value="UER00332"/>
</dbReference>
<dbReference type="Proteomes" id="UP000000656">
    <property type="component" value="Chromosome 1"/>
</dbReference>
<dbReference type="GO" id="GO:0005524">
    <property type="term" value="F:ATP binding"/>
    <property type="evidence" value="ECO:0007669"/>
    <property type="project" value="UniProtKB-KW"/>
</dbReference>
<dbReference type="GO" id="GO:0004515">
    <property type="term" value="F:nicotinate-nucleotide adenylyltransferase activity"/>
    <property type="evidence" value="ECO:0007669"/>
    <property type="project" value="UniProtKB-UniRule"/>
</dbReference>
<dbReference type="GO" id="GO:0009435">
    <property type="term" value="P:NAD biosynthetic process"/>
    <property type="evidence" value="ECO:0007669"/>
    <property type="project" value="UniProtKB-UniRule"/>
</dbReference>
<dbReference type="CDD" id="cd02165">
    <property type="entry name" value="NMNAT"/>
    <property type="match status" value="1"/>
</dbReference>
<dbReference type="FunFam" id="3.40.50.620:FF:000251">
    <property type="entry name" value="Probable nicotinate-nucleotide adenylyltransferase"/>
    <property type="match status" value="1"/>
</dbReference>
<dbReference type="Gene3D" id="3.40.50.620">
    <property type="entry name" value="HUPs"/>
    <property type="match status" value="1"/>
</dbReference>
<dbReference type="HAMAP" id="MF_00244">
    <property type="entry name" value="NaMN_adenylyltr"/>
    <property type="match status" value="1"/>
</dbReference>
<dbReference type="InterPro" id="IPR004821">
    <property type="entry name" value="Cyt_trans-like"/>
</dbReference>
<dbReference type="InterPro" id="IPR005248">
    <property type="entry name" value="NadD/NMNAT"/>
</dbReference>
<dbReference type="InterPro" id="IPR014729">
    <property type="entry name" value="Rossmann-like_a/b/a_fold"/>
</dbReference>
<dbReference type="NCBIfam" id="TIGR00125">
    <property type="entry name" value="cyt_tran_rel"/>
    <property type="match status" value="1"/>
</dbReference>
<dbReference type="NCBIfam" id="TIGR00482">
    <property type="entry name" value="nicotinate (nicotinamide) nucleotide adenylyltransferase"/>
    <property type="match status" value="1"/>
</dbReference>
<dbReference type="PANTHER" id="PTHR39321">
    <property type="entry name" value="NICOTINATE-NUCLEOTIDE ADENYLYLTRANSFERASE-RELATED"/>
    <property type="match status" value="1"/>
</dbReference>
<dbReference type="PANTHER" id="PTHR39321:SF3">
    <property type="entry name" value="PHOSPHOPANTETHEINE ADENYLYLTRANSFERASE"/>
    <property type="match status" value="1"/>
</dbReference>
<dbReference type="Pfam" id="PF01467">
    <property type="entry name" value="CTP_transf_like"/>
    <property type="match status" value="1"/>
</dbReference>
<dbReference type="SUPFAM" id="SSF52374">
    <property type="entry name" value="Nucleotidylyl transferase"/>
    <property type="match status" value="1"/>
</dbReference>
<organism>
    <name type="scientific">Leptospira borgpetersenii serovar Hardjo-bovis (strain JB197)</name>
    <dbReference type="NCBI Taxonomy" id="355277"/>
    <lineage>
        <taxon>Bacteria</taxon>
        <taxon>Pseudomonadati</taxon>
        <taxon>Spirochaetota</taxon>
        <taxon>Spirochaetia</taxon>
        <taxon>Leptospirales</taxon>
        <taxon>Leptospiraceae</taxon>
        <taxon>Leptospira</taxon>
    </lineage>
</organism>
<name>NADD_LEPBJ</name>
<sequence length="197" mass="23112">MTSPILTGIFGGSFDPPHEGHSGILKSFFREVPDCREIFLIPNRQNPLKGEKFSSSENILEMLNLFVSEFSETIRILDLELNHPGPSYTIETIQKLKTLHPNREFVLLIGEDNYSNFHKWRNYEKILDEVRKVFVFRRFSEVVPRNSKLFSQFQFLKNPLIPASSTDLRQSFFQSTIPDRIPKKVLDYILRNRLYSK</sequence>
<reference key="1">
    <citation type="journal article" date="2006" name="Proc. Natl. Acad. Sci. U.S.A.">
        <title>Genome reduction in Leptospira borgpetersenii reflects limited transmission potential.</title>
        <authorList>
            <person name="Bulach D.M."/>
            <person name="Zuerner R.L."/>
            <person name="Wilson P."/>
            <person name="Seemann T."/>
            <person name="McGrath A."/>
            <person name="Cullen P.A."/>
            <person name="Davis J."/>
            <person name="Johnson M."/>
            <person name="Kuczek E."/>
            <person name="Alt D.P."/>
            <person name="Peterson-Burch B."/>
            <person name="Coppel R.L."/>
            <person name="Rood J.I."/>
            <person name="Davies J.K."/>
            <person name="Adler B."/>
        </authorList>
    </citation>
    <scope>NUCLEOTIDE SEQUENCE [LARGE SCALE GENOMIC DNA]</scope>
    <source>
        <strain>JB197</strain>
    </source>
</reference>
<keyword id="KW-0067">ATP-binding</keyword>
<keyword id="KW-0520">NAD</keyword>
<keyword id="KW-0547">Nucleotide-binding</keyword>
<keyword id="KW-0548">Nucleotidyltransferase</keyword>
<keyword id="KW-0662">Pyridine nucleotide biosynthesis</keyword>
<keyword id="KW-0808">Transferase</keyword>
<protein>
    <recommendedName>
        <fullName evidence="1">Probable nicotinate-nucleotide adenylyltransferase</fullName>
        <ecNumber evidence="1">2.7.7.18</ecNumber>
    </recommendedName>
    <alternativeName>
        <fullName evidence="1">Deamido-NAD(+) diphosphorylase</fullName>
    </alternativeName>
    <alternativeName>
        <fullName evidence="1">Deamido-NAD(+) pyrophosphorylase</fullName>
    </alternativeName>
    <alternativeName>
        <fullName evidence="1">Nicotinate mononucleotide adenylyltransferase</fullName>
        <shortName evidence="1">NaMN adenylyltransferase</shortName>
    </alternativeName>
</protein>
<gene>
    <name evidence="1" type="primary">nadD</name>
    <name type="ordered locus">LBJ_2489</name>
</gene>
<comment type="function">
    <text evidence="1">Catalyzes the reversible adenylation of nicotinate mononucleotide (NaMN) to nicotinic acid adenine dinucleotide (NaAD).</text>
</comment>
<comment type="catalytic activity">
    <reaction evidence="1">
        <text>nicotinate beta-D-ribonucleotide + ATP + H(+) = deamido-NAD(+) + diphosphate</text>
        <dbReference type="Rhea" id="RHEA:22860"/>
        <dbReference type="ChEBI" id="CHEBI:15378"/>
        <dbReference type="ChEBI" id="CHEBI:30616"/>
        <dbReference type="ChEBI" id="CHEBI:33019"/>
        <dbReference type="ChEBI" id="CHEBI:57502"/>
        <dbReference type="ChEBI" id="CHEBI:58437"/>
        <dbReference type="EC" id="2.7.7.18"/>
    </reaction>
</comment>
<comment type="pathway">
    <text evidence="1">Cofactor biosynthesis; NAD(+) biosynthesis; deamido-NAD(+) from nicotinate D-ribonucleotide: step 1/1.</text>
</comment>
<comment type="similarity">
    <text evidence="1">Belongs to the NadD family.</text>
</comment>